<comment type="function">
    <text>May act as receptor for class I MHC antigens.</text>
</comment>
<comment type="subcellular location">
    <subcellularLocation>
        <location>Membrane</location>
        <topology>Single-pass type I membrane protein</topology>
    </subcellularLocation>
</comment>
<comment type="alternative products">
    <event type="alternative splicing"/>
    <isoform>
        <id>O75023-1</id>
        <name>1</name>
        <sequence type="displayed"/>
    </isoform>
    <isoform>
        <id>O75023-2</id>
        <name>2</name>
        <sequence type="described" ref="VSP_008461 VSP_008462"/>
    </isoform>
    <isoform>
        <id>O75023-3</id>
        <name>3</name>
        <sequence type="described" ref="VSP_008462"/>
    </isoform>
</comment>
<comment type="tissue specificity">
    <text evidence="7">Detected in a natural killer (NK) cells.</text>
</comment>
<comment type="domain">
    <text>Contains 2 copies of a cytoplasmic motif that is referred to as the immunoreceptor tyrosine-based inhibitor motif (ITIM). This motif is involved in modulation of cellular responses. The phosphorylated ITIM motif can bind the SH2 domain of several SH2-containing phosphatases.</text>
</comment>
<organism>
    <name type="scientific">Homo sapiens</name>
    <name type="common">Human</name>
    <dbReference type="NCBI Taxonomy" id="9606"/>
    <lineage>
        <taxon>Eukaryota</taxon>
        <taxon>Metazoa</taxon>
        <taxon>Chordata</taxon>
        <taxon>Craniata</taxon>
        <taxon>Vertebrata</taxon>
        <taxon>Euteleostomi</taxon>
        <taxon>Mammalia</taxon>
        <taxon>Eutheria</taxon>
        <taxon>Euarchontoglires</taxon>
        <taxon>Primates</taxon>
        <taxon>Haplorrhini</taxon>
        <taxon>Catarrhini</taxon>
        <taxon>Hominidae</taxon>
        <taxon>Homo</taxon>
    </lineage>
</organism>
<proteinExistence type="evidence at protein level"/>
<protein>
    <recommendedName>
        <fullName>Leukocyte immunoglobulin-like receptor subfamily B member 5</fullName>
    </recommendedName>
    <alternativeName>
        <fullName>CD85 antigen-like family member C</fullName>
    </alternativeName>
    <alternativeName>
        <fullName>Leukocyte immunoglobulin-like receptor 8</fullName>
        <shortName>LIR-8</shortName>
    </alternativeName>
    <cdAntigenName>CD85c</cdAntigenName>
</protein>
<evidence type="ECO:0000255" key="1"/>
<evidence type="ECO:0000255" key="2">
    <source>
        <dbReference type="PROSITE-ProRule" id="PRU00114"/>
    </source>
</evidence>
<evidence type="ECO:0000256" key="3">
    <source>
        <dbReference type="SAM" id="MobiDB-lite"/>
    </source>
</evidence>
<evidence type="ECO:0000269" key="4">
    <source>
    </source>
</evidence>
<evidence type="ECO:0000269" key="5">
    <source>
    </source>
</evidence>
<evidence type="ECO:0000269" key="6">
    <source>
    </source>
</evidence>
<evidence type="ECO:0000269" key="7">
    <source>
    </source>
</evidence>
<evidence type="ECO:0000303" key="8">
    <source>
    </source>
</evidence>
<evidence type="ECO:0000305" key="9"/>
<evidence type="ECO:0007744" key="10">
    <source>
    </source>
</evidence>
<name>LIRB5_HUMAN</name>
<feature type="signal peptide" evidence="1">
    <location>
        <begin position="1"/>
        <end position="23"/>
    </location>
</feature>
<feature type="chain" id="PRO_0000014825" description="Leukocyte immunoglobulin-like receptor subfamily B member 5">
    <location>
        <begin position="24"/>
        <end position="590"/>
    </location>
</feature>
<feature type="topological domain" description="Extracellular" evidence="1">
    <location>
        <begin position="24"/>
        <end position="458"/>
    </location>
</feature>
<feature type="transmembrane region" description="Helical" evidence="1">
    <location>
        <begin position="459"/>
        <end position="479"/>
    </location>
</feature>
<feature type="topological domain" description="Cytoplasmic" evidence="1">
    <location>
        <begin position="480"/>
        <end position="590"/>
    </location>
</feature>
<feature type="domain" description="Ig-like C2-type 1">
    <location>
        <begin position="27"/>
        <end position="116"/>
    </location>
</feature>
<feature type="domain" description="Ig-like C2-type 2">
    <location>
        <begin position="111"/>
        <end position="228"/>
    </location>
</feature>
<feature type="domain" description="Ig-like C2-type 3">
    <location>
        <begin position="224"/>
        <end position="313"/>
    </location>
</feature>
<feature type="domain" description="Ig-like C2-type 4">
    <location>
        <begin position="337"/>
        <end position="418"/>
    </location>
</feature>
<feature type="region of interest" description="Disordered" evidence="3">
    <location>
        <begin position="416"/>
        <end position="449"/>
    </location>
</feature>
<feature type="region of interest" description="Disordered" evidence="3">
    <location>
        <begin position="488"/>
        <end position="514"/>
    </location>
</feature>
<feature type="region of interest" description="Disordered" evidence="3">
    <location>
        <begin position="529"/>
        <end position="550"/>
    </location>
</feature>
<feature type="region of interest" description="Disordered" evidence="3">
    <location>
        <begin position="562"/>
        <end position="590"/>
    </location>
</feature>
<feature type="short sequence motif" description="ITIM motif 1">
    <location>
        <begin position="552"/>
        <end position="557"/>
    </location>
</feature>
<feature type="short sequence motif" description="ITIM motif 2">
    <location>
        <begin position="582"/>
        <end position="587"/>
    </location>
</feature>
<feature type="compositionally biased region" description="Low complexity" evidence="3">
    <location>
        <begin position="416"/>
        <end position="433"/>
    </location>
</feature>
<feature type="compositionally biased region" description="Basic and acidic residues" evidence="3">
    <location>
        <begin position="562"/>
        <end position="578"/>
    </location>
</feature>
<feature type="modified residue" description="Phosphoserine" evidence="10">
    <location>
        <position position="514"/>
    </location>
</feature>
<feature type="glycosylation site" description="N-linked (GlcNAc...) asparagine" evidence="1">
    <location>
        <position position="139"/>
    </location>
</feature>
<feature type="glycosylation site" description="N-linked (GlcNAc...) asparagine" evidence="6">
    <location>
        <position position="279"/>
    </location>
</feature>
<feature type="glycosylation site" description="N-linked (GlcNAc...) asparagine" evidence="1">
    <location>
        <position position="339"/>
    </location>
</feature>
<feature type="disulfide bond" evidence="2">
    <location>
        <begin position="49"/>
        <end position="98"/>
    </location>
</feature>
<feature type="disulfide bond" evidence="2">
    <location>
        <begin position="144"/>
        <end position="195"/>
    </location>
</feature>
<feature type="disulfide bond" evidence="2">
    <location>
        <begin position="244"/>
        <end position="295"/>
    </location>
</feature>
<feature type="disulfide bond" evidence="2">
    <location>
        <begin position="344"/>
        <end position="395"/>
    </location>
</feature>
<feature type="splice variant" id="VSP_008461" description="In isoform 2." evidence="8">
    <location>
        <begin position="119"/>
        <end position="218"/>
    </location>
</feature>
<feature type="splice variant" id="VSP_008462" description="In isoform 2 and isoform 3." evidence="8">
    <original>P</original>
    <variation>PA</variation>
    <location>
        <position position="435"/>
    </location>
</feature>
<feature type="sequence variant" id="VAR_061316" description="In dbSNP:rs12975366.">
    <original>D</original>
    <variation>G</variation>
    <location>
        <position position="247"/>
    </location>
</feature>
<feature type="sequence variant" id="VAR_085724" description="In dbSNP:rs76522818." evidence="4 5 7">
    <original>P</original>
    <variation>R</variation>
    <location>
        <position position="542"/>
    </location>
</feature>
<feature type="sequence conflict" description="In Ref. 2; AK223296." evidence="9" ref="2">
    <original>G</original>
    <variation>W</variation>
    <location>
        <position position="12"/>
    </location>
</feature>
<feature type="sequence conflict" description="In Ref. 2; AK223296." evidence="9" ref="2">
    <original>L</original>
    <variation>R</variation>
    <location>
        <position position="255"/>
    </location>
</feature>
<feature type="sequence conflict" description="In Ref. 2; BAB71361." evidence="9" ref="2">
    <original>L</original>
    <variation>S</variation>
    <location>
        <position position="355"/>
    </location>
</feature>
<keyword id="KW-1064">Adaptive immunity</keyword>
<keyword id="KW-0025">Alternative splicing</keyword>
<keyword id="KW-1015">Disulfide bond</keyword>
<keyword id="KW-0325">Glycoprotein</keyword>
<keyword id="KW-0391">Immunity</keyword>
<keyword id="KW-0393">Immunoglobulin domain</keyword>
<keyword id="KW-0472">Membrane</keyword>
<keyword id="KW-0597">Phosphoprotein</keyword>
<keyword id="KW-1267">Proteomics identification</keyword>
<keyword id="KW-0675">Receptor</keyword>
<keyword id="KW-1185">Reference proteome</keyword>
<keyword id="KW-0677">Repeat</keyword>
<keyword id="KW-0732">Signal</keyword>
<keyword id="KW-0812">Transmembrane</keyword>
<keyword id="KW-1133">Transmembrane helix</keyword>
<reference key="1">
    <citation type="journal article" date="1997" name="J. Immunol.">
        <title>A family of human lymphoid and myeloid Ig-like receptors, some of which bind to MHC class I molecules.</title>
        <authorList>
            <person name="Borges L."/>
            <person name="Hsu M.-L."/>
            <person name="Fanger N."/>
            <person name="Kubin M."/>
            <person name="Cosman D."/>
        </authorList>
    </citation>
    <scope>NUCLEOTIDE SEQUENCE [MRNA] (ISOFORM 1)</scope>
    <scope>TISSUE SPECIFICITY</scope>
    <scope>VARIANT ARG-542</scope>
    <source>
        <tissue>Peripheral blood leukocyte</tissue>
    </source>
</reference>
<reference key="2">
    <citation type="journal article" date="2004" name="Nat. Genet.">
        <title>Complete sequencing and characterization of 21,243 full-length human cDNAs.</title>
        <authorList>
            <person name="Ota T."/>
            <person name="Suzuki Y."/>
            <person name="Nishikawa T."/>
            <person name="Otsuki T."/>
            <person name="Sugiyama T."/>
            <person name="Irie R."/>
            <person name="Wakamatsu A."/>
            <person name="Hayashi K."/>
            <person name="Sato H."/>
            <person name="Nagai K."/>
            <person name="Kimura K."/>
            <person name="Makita H."/>
            <person name="Sekine M."/>
            <person name="Obayashi M."/>
            <person name="Nishi T."/>
            <person name="Shibahara T."/>
            <person name="Tanaka T."/>
            <person name="Ishii S."/>
            <person name="Yamamoto J."/>
            <person name="Saito K."/>
            <person name="Kawai Y."/>
            <person name="Isono Y."/>
            <person name="Nakamura Y."/>
            <person name="Nagahari K."/>
            <person name="Murakami K."/>
            <person name="Yasuda T."/>
            <person name="Iwayanagi T."/>
            <person name="Wagatsuma M."/>
            <person name="Shiratori A."/>
            <person name="Sudo H."/>
            <person name="Hosoiri T."/>
            <person name="Kaku Y."/>
            <person name="Kodaira H."/>
            <person name="Kondo H."/>
            <person name="Sugawara M."/>
            <person name="Takahashi M."/>
            <person name="Kanda K."/>
            <person name="Yokoi T."/>
            <person name="Furuya T."/>
            <person name="Kikkawa E."/>
            <person name="Omura Y."/>
            <person name="Abe K."/>
            <person name="Kamihara K."/>
            <person name="Katsuta N."/>
            <person name="Sato K."/>
            <person name="Tanikawa M."/>
            <person name="Yamazaki M."/>
            <person name="Ninomiya K."/>
            <person name="Ishibashi T."/>
            <person name="Yamashita H."/>
            <person name="Murakawa K."/>
            <person name="Fujimori K."/>
            <person name="Tanai H."/>
            <person name="Kimata M."/>
            <person name="Watanabe M."/>
            <person name="Hiraoka S."/>
            <person name="Chiba Y."/>
            <person name="Ishida S."/>
            <person name="Ono Y."/>
            <person name="Takiguchi S."/>
            <person name="Watanabe S."/>
            <person name="Yosida M."/>
            <person name="Hotuta T."/>
            <person name="Kusano J."/>
            <person name="Kanehori K."/>
            <person name="Takahashi-Fujii A."/>
            <person name="Hara H."/>
            <person name="Tanase T.-O."/>
            <person name="Nomura Y."/>
            <person name="Togiya S."/>
            <person name="Komai F."/>
            <person name="Hara R."/>
            <person name="Takeuchi K."/>
            <person name="Arita M."/>
            <person name="Imose N."/>
            <person name="Musashino K."/>
            <person name="Yuuki H."/>
            <person name="Oshima A."/>
            <person name="Sasaki N."/>
            <person name="Aotsuka S."/>
            <person name="Yoshikawa Y."/>
            <person name="Matsunawa H."/>
            <person name="Ichihara T."/>
            <person name="Shiohata N."/>
            <person name="Sano S."/>
            <person name="Moriya S."/>
            <person name="Momiyama H."/>
            <person name="Satoh N."/>
            <person name="Takami S."/>
            <person name="Terashima Y."/>
            <person name="Suzuki O."/>
            <person name="Nakagawa S."/>
            <person name="Senoh A."/>
            <person name="Mizoguchi H."/>
            <person name="Goto Y."/>
            <person name="Shimizu F."/>
            <person name="Wakebe H."/>
            <person name="Hishigaki H."/>
            <person name="Watanabe T."/>
            <person name="Sugiyama A."/>
            <person name="Takemoto M."/>
            <person name="Kawakami B."/>
            <person name="Yamazaki M."/>
            <person name="Watanabe K."/>
            <person name="Kumagai A."/>
            <person name="Itakura S."/>
            <person name="Fukuzumi Y."/>
            <person name="Fujimori Y."/>
            <person name="Komiyama M."/>
            <person name="Tashiro H."/>
            <person name="Tanigami A."/>
            <person name="Fujiwara T."/>
            <person name="Ono T."/>
            <person name="Yamada K."/>
            <person name="Fujii Y."/>
            <person name="Ozaki K."/>
            <person name="Hirao M."/>
            <person name="Ohmori Y."/>
            <person name="Kawabata A."/>
            <person name="Hikiji T."/>
            <person name="Kobatake N."/>
            <person name="Inagaki H."/>
            <person name="Ikema Y."/>
            <person name="Okamoto S."/>
            <person name="Okitani R."/>
            <person name="Kawakami T."/>
            <person name="Noguchi S."/>
            <person name="Itoh T."/>
            <person name="Shigeta K."/>
            <person name="Senba T."/>
            <person name="Matsumura K."/>
            <person name="Nakajima Y."/>
            <person name="Mizuno T."/>
            <person name="Morinaga M."/>
            <person name="Sasaki M."/>
            <person name="Togashi T."/>
            <person name="Oyama M."/>
            <person name="Hata H."/>
            <person name="Watanabe M."/>
            <person name="Komatsu T."/>
            <person name="Mizushima-Sugano J."/>
            <person name="Satoh T."/>
            <person name="Shirai Y."/>
            <person name="Takahashi Y."/>
            <person name="Nakagawa K."/>
            <person name="Okumura K."/>
            <person name="Nagase T."/>
            <person name="Nomura N."/>
            <person name="Kikuchi H."/>
            <person name="Masuho Y."/>
            <person name="Yamashita R."/>
            <person name="Nakai K."/>
            <person name="Yada T."/>
            <person name="Nakamura Y."/>
            <person name="Ohara O."/>
            <person name="Isogai T."/>
            <person name="Sugano S."/>
        </authorList>
    </citation>
    <scope>NUCLEOTIDE SEQUENCE [LARGE SCALE MRNA] (ISOFORMS 2 AND 3)</scope>
    <scope>VARIANT ARG-542</scope>
    <source>
        <tissue>Small intestine</tissue>
        <tissue>Synovium</tissue>
    </source>
</reference>
<reference key="3">
    <citation type="journal article" date="2004" name="Nature">
        <title>The DNA sequence and biology of human chromosome 19.</title>
        <authorList>
            <person name="Grimwood J."/>
            <person name="Gordon L.A."/>
            <person name="Olsen A.S."/>
            <person name="Terry A."/>
            <person name="Schmutz J."/>
            <person name="Lamerdin J.E."/>
            <person name="Hellsten U."/>
            <person name="Goodstein D."/>
            <person name="Couronne O."/>
            <person name="Tran-Gyamfi M."/>
            <person name="Aerts A."/>
            <person name="Altherr M."/>
            <person name="Ashworth L."/>
            <person name="Bajorek E."/>
            <person name="Black S."/>
            <person name="Branscomb E."/>
            <person name="Caenepeel S."/>
            <person name="Carrano A.V."/>
            <person name="Caoile C."/>
            <person name="Chan Y.M."/>
            <person name="Christensen M."/>
            <person name="Cleland C.A."/>
            <person name="Copeland A."/>
            <person name="Dalin E."/>
            <person name="Dehal P."/>
            <person name="Denys M."/>
            <person name="Detter J.C."/>
            <person name="Escobar J."/>
            <person name="Flowers D."/>
            <person name="Fotopulos D."/>
            <person name="Garcia C."/>
            <person name="Georgescu A.M."/>
            <person name="Glavina T."/>
            <person name="Gomez M."/>
            <person name="Gonzales E."/>
            <person name="Groza M."/>
            <person name="Hammon N."/>
            <person name="Hawkins T."/>
            <person name="Haydu L."/>
            <person name="Ho I."/>
            <person name="Huang W."/>
            <person name="Israni S."/>
            <person name="Jett J."/>
            <person name="Kadner K."/>
            <person name="Kimball H."/>
            <person name="Kobayashi A."/>
            <person name="Larionov V."/>
            <person name="Leem S.-H."/>
            <person name="Lopez F."/>
            <person name="Lou Y."/>
            <person name="Lowry S."/>
            <person name="Malfatti S."/>
            <person name="Martinez D."/>
            <person name="McCready P.M."/>
            <person name="Medina C."/>
            <person name="Morgan J."/>
            <person name="Nelson K."/>
            <person name="Nolan M."/>
            <person name="Ovcharenko I."/>
            <person name="Pitluck S."/>
            <person name="Pollard M."/>
            <person name="Popkie A.P."/>
            <person name="Predki P."/>
            <person name="Quan G."/>
            <person name="Ramirez L."/>
            <person name="Rash S."/>
            <person name="Retterer J."/>
            <person name="Rodriguez A."/>
            <person name="Rogers S."/>
            <person name="Salamov A."/>
            <person name="Salazar A."/>
            <person name="She X."/>
            <person name="Smith D."/>
            <person name="Slezak T."/>
            <person name="Solovyev V."/>
            <person name="Thayer N."/>
            <person name="Tice H."/>
            <person name="Tsai M."/>
            <person name="Ustaszewska A."/>
            <person name="Vo N."/>
            <person name="Wagner M."/>
            <person name="Wheeler J."/>
            <person name="Wu K."/>
            <person name="Xie G."/>
            <person name="Yang J."/>
            <person name="Dubchak I."/>
            <person name="Furey T.S."/>
            <person name="DeJong P."/>
            <person name="Dickson M."/>
            <person name="Gordon D."/>
            <person name="Eichler E.E."/>
            <person name="Pennacchio L.A."/>
            <person name="Richardson P."/>
            <person name="Stubbs L."/>
            <person name="Rokhsar D.S."/>
            <person name="Myers R.M."/>
            <person name="Rubin E.M."/>
            <person name="Lucas S.M."/>
        </authorList>
    </citation>
    <scope>NUCLEOTIDE SEQUENCE [LARGE SCALE GENOMIC DNA]</scope>
</reference>
<reference key="4">
    <citation type="journal article" date="2004" name="Genome Res.">
        <title>The status, quality, and expansion of the NIH full-length cDNA project: the Mammalian Gene Collection (MGC).</title>
        <authorList>
            <consortium name="The MGC Project Team"/>
        </authorList>
    </citation>
    <scope>NUCLEOTIDE SEQUENCE [LARGE SCALE MRNA] (ISOFORM 1)</scope>
    <scope>VARIANT ARG-542</scope>
    <source>
        <tissue>Pancreas</tissue>
        <tissue>Spleen</tissue>
    </source>
</reference>
<reference key="5">
    <citation type="journal article" date="2005" name="J. Proteome Res.">
        <title>Human plasma N-glycoproteome analysis by immunoaffinity subtraction, hydrazide chemistry, and mass spectrometry.</title>
        <authorList>
            <person name="Liu T."/>
            <person name="Qian W.-J."/>
            <person name="Gritsenko M.A."/>
            <person name="Camp D.G. II"/>
            <person name="Monroe M.E."/>
            <person name="Moore R.J."/>
            <person name="Smith R.D."/>
        </authorList>
    </citation>
    <scope>GLYCOSYLATION [LARGE SCALE ANALYSIS] AT ASN-279</scope>
    <source>
        <tissue>Plasma</tissue>
    </source>
</reference>
<reference key="6">
    <citation type="journal article" date="2014" name="J. Proteomics">
        <title>An enzyme assisted RP-RPLC approach for in-depth analysis of human liver phosphoproteome.</title>
        <authorList>
            <person name="Bian Y."/>
            <person name="Song C."/>
            <person name="Cheng K."/>
            <person name="Dong M."/>
            <person name="Wang F."/>
            <person name="Huang J."/>
            <person name="Sun D."/>
            <person name="Wang L."/>
            <person name="Ye M."/>
            <person name="Zou H."/>
        </authorList>
    </citation>
    <scope>PHOSPHORYLATION [LARGE SCALE ANALYSIS] AT SER-514</scope>
    <scope>IDENTIFICATION BY MASS SPECTROMETRY [LARGE SCALE ANALYSIS]</scope>
    <source>
        <tissue>Liver</tissue>
    </source>
</reference>
<dbReference type="EMBL" id="AF025534">
    <property type="protein sequence ID" value="AAB87668.1"/>
    <property type="molecule type" value="mRNA"/>
</dbReference>
<dbReference type="EMBL" id="AK057072">
    <property type="protein sequence ID" value="BAB71361.1"/>
    <property type="molecule type" value="mRNA"/>
</dbReference>
<dbReference type="EMBL" id="AK223296">
    <property type="status" value="NOT_ANNOTATED_CDS"/>
    <property type="molecule type" value="mRNA"/>
</dbReference>
<dbReference type="EMBL" id="AC010492">
    <property type="status" value="NOT_ANNOTATED_CDS"/>
    <property type="molecule type" value="Genomic_DNA"/>
</dbReference>
<dbReference type="EMBL" id="BC025704">
    <property type="protein sequence ID" value="AAH25704.1"/>
    <property type="molecule type" value="mRNA"/>
</dbReference>
<dbReference type="CCDS" id="CCDS12885.1">
    <molecule id="O75023-1"/>
</dbReference>
<dbReference type="CCDS" id="CCDS42611.1">
    <molecule id="O75023-2"/>
</dbReference>
<dbReference type="CCDS" id="CCDS46176.1">
    <molecule id="O75023-3"/>
</dbReference>
<dbReference type="RefSeq" id="NP_001074911.2">
    <molecule id="O75023-3"/>
    <property type="nucleotide sequence ID" value="NM_001081442.3"/>
</dbReference>
<dbReference type="RefSeq" id="NP_001074912.2">
    <molecule id="O75023-2"/>
    <property type="nucleotide sequence ID" value="NM_001081443.3"/>
</dbReference>
<dbReference type="RefSeq" id="NP_001291386.1">
    <property type="nucleotide sequence ID" value="NM_001304457.1"/>
</dbReference>
<dbReference type="RefSeq" id="NP_006831.2">
    <molecule id="O75023-1"/>
    <property type="nucleotide sequence ID" value="NM_006840.5"/>
</dbReference>
<dbReference type="SMR" id="O75023"/>
<dbReference type="BioGRID" id="116186">
    <property type="interactions" value="2"/>
</dbReference>
<dbReference type="FunCoup" id="O75023">
    <property type="interactions" value="89"/>
</dbReference>
<dbReference type="IntAct" id="O75023">
    <property type="interactions" value="1"/>
</dbReference>
<dbReference type="MINT" id="O75023"/>
<dbReference type="STRING" id="9606.ENSP00000406478"/>
<dbReference type="GlyCosmos" id="O75023">
    <property type="glycosylation" value="6 sites, 1 glycan"/>
</dbReference>
<dbReference type="GlyGen" id="O75023">
    <property type="glycosylation" value="8 sites, 6 N-linked glycans (2 sites), 1 O-linked glycan (3 sites)"/>
</dbReference>
<dbReference type="iPTMnet" id="O75023"/>
<dbReference type="PhosphoSitePlus" id="O75023"/>
<dbReference type="BioMuta" id="LILRB5"/>
<dbReference type="jPOST" id="O75023"/>
<dbReference type="MassIVE" id="O75023"/>
<dbReference type="PaxDb" id="9606-ENSP00000406478"/>
<dbReference type="PeptideAtlas" id="O75023"/>
<dbReference type="ProteomicsDB" id="49699">
    <molecule id="O75023-1"/>
</dbReference>
<dbReference type="ProteomicsDB" id="49700">
    <molecule id="O75023-2"/>
</dbReference>
<dbReference type="ProteomicsDB" id="49701">
    <molecule id="O75023-3"/>
</dbReference>
<dbReference type="Antibodypedia" id="2302">
    <property type="antibodies" value="139 antibodies from 27 providers"/>
</dbReference>
<dbReference type="DNASU" id="10990"/>
<dbReference type="Ensembl" id="ENST00000316219.9">
    <molecule id="O75023-1"/>
    <property type="protein sequence ID" value="ENSP00000320390.5"/>
    <property type="gene ID" value="ENSG00000105609.17"/>
</dbReference>
<dbReference type="Ensembl" id="ENST00000345866.10">
    <molecule id="O75023-2"/>
    <property type="protein sequence ID" value="ENSP00000263430.8"/>
    <property type="gene ID" value="ENSG00000105609.17"/>
</dbReference>
<dbReference type="Ensembl" id="ENST00000449561.3">
    <molecule id="O75023-3"/>
    <property type="protein sequence ID" value="ENSP00000406478.1"/>
    <property type="gene ID" value="ENSG00000105609.17"/>
</dbReference>
<dbReference type="Ensembl" id="ENST00000610764.4">
    <property type="protein sequence ID" value="ENSP00000479022.1"/>
    <property type="gene ID" value="ENSG00000277414.4"/>
</dbReference>
<dbReference type="Ensembl" id="ENST00000614318.1">
    <property type="protein sequence ID" value="ENSP00000483649.1"/>
    <property type="gene ID" value="ENSG00000278437.4"/>
</dbReference>
<dbReference type="Ensembl" id="ENST00000615429.1">
    <property type="protein sequence ID" value="ENSP00000482404.1"/>
    <property type="gene ID" value="ENSG00000274311.4"/>
</dbReference>
<dbReference type="Ensembl" id="ENST00000615837.4">
    <property type="protein sequence ID" value="ENSP00000478835.1"/>
    <property type="gene ID" value="ENSG00000277414.4"/>
</dbReference>
<dbReference type="Ensembl" id="ENST00000616618.4">
    <property type="protein sequence ID" value="ENSP00000478912.1"/>
    <property type="gene ID" value="ENSG00000274311.4"/>
</dbReference>
<dbReference type="Ensembl" id="ENST00000616805.4">
    <property type="protein sequence ID" value="ENSP00000483502.1"/>
    <property type="gene ID" value="ENSG00000273991.4"/>
</dbReference>
<dbReference type="Ensembl" id="ENST00000617355.4">
    <property type="protein sequence ID" value="ENSP00000483481.1"/>
    <property type="gene ID" value="ENSG00000274311.4"/>
</dbReference>
<dbReference type="Ensembl" id="ENST00000619608.4">
    <property type="protein sequence ID" value="ENSP00000479413.1"/>
    <property type="gene ID" value="ENSG00000277414.4"/>
</dbReference>
<dbReference type="Ensembl" id="ENST00000620714.4">
    <property type="protein sequence ID" value="ENSP00000480909.1"/>
    <property type="gene ID" value="ENSG00000273991.4"/>
</dbReference>
<dbReference type="Ensembl" id="ENST00000621193.4">
    <property type="protein sequence ID" value="ENSP00000482062.1"/>
    <property type="gene ID" value="ENSG00000278437.4"/>
</dbReference>
<dbReference type="Ensembl" id="ENST00000621867.4">
    <property type="protein sequence ID" value="ENSP00000481263.1"/>
    <property type="gene ID" value="ENSG00000273991.4"/>
</dbReference>
<dbReference type="Ensembl" id="ENST00000622596.4">
    <property type="protein sequence ID" value="ENSP00000482535.1"/>
    <property type="gene ID" value="ENSG00000278437.4"/>
</dbReference>
<dbReference type="GeneID" id="10990"/>
<dbReference type="KEGG" id="hsa:10990"/>
<dbReference type="MANE-Select" id="ENST00000449561.3">
    <molecule id="O75023-3"/>
    <property type="protein sequence ID" value="ENSP00000406478.1"/>
    <property type="RefSeq nucleotide sequence ID" value="NM_001081442.3"/>
    <property type="RefSeq protein sequence ID" value="NP_001074911.2"/>
</dbReference>
<dbReference type="UCSC" id="uc002qex.4">
    <molecule id="O75023-1"/>
    <property type="organism name" value="human"/>
</dbReference>
<dbReference type="AGR" id="HGNC:6609"/>
<dbReference type="CTD" id="10990"/>
<dbReference type="DisGeNET" id="10990"/>
<dbReference type="GeneCards" id="LILRB5"/>
<dbReference type="HGNC" id="HGNC:6609">
    <property type="gene designation" value="LILRB5"/>
</dbReference>
<dbReference type="HPA" id="ENSG00000105609">
    <property type="expression patterns" value="Tissue enhanced (adipose tissue, lymphoid tissue)"/>
</dbReference>
<dbReference type="MIM" id="604814">
    <property type="type" value="gene"/>
</dbReference>
<dbReference type="neXtProt" id="NX_O75023"/>
<dbReference type="OpenTargets" id="ENSG00000105609"/>
<dbReference type="PharmGKB" id="PA30383"/>
<dbReference type="VEuPathDB" id="HostDB:ENSG00000105609"/>
<dbReference type="eggNOG" id="ENOG502RYEX">
    <property type="taxonomic scope" value="Eukaryota"/>
</dbReference>
<dbReference type="GeneTree" id="ENSGT01100000263478"/>
<dbReference type="HOGENOM" id="CLU_021100_2_3_1"/>
<dbReference type="InParanoid" id="O75023"/>
<dbReference type="OMA" id="RCYSAIM"/>
<dbReference type="OrthoDB" id="9427497at2759"/>
<dbReference type="PAN-GO" id="O75023">
    <property type="GO annotations" value="3 GO annotations based on evolutionary models"/>
</dbReference>
<dbReference type="PhylomeDB" id="O75023"/>
<dbReference type="TreeFam" id="TF336644"/>
<dbReference type="PathwayCommons" id="O75023"/>
<dbReference type="Reactome" id="R-HSA-198933">
    <property type="pathway name" value="Immunoregulatory interactions between a Lymphoid and a non-Lymphoid cell"/>
</dbReference>
<dbReference type="SignaLink" id="O75023"/>
<dbReference type="BioGRID-ORCS" id="10990">
    <property type="hits" value="17 hits in 1141 CRISPR screens"/>
</dbReference>
<dbReference type="GeneWiki" id="LILRB5"/>
<dbReference type="GenomeRNAi" id="10990"/>
<dbReference type="Pharos" id="O75023">
    <property type="development level" value="Tbio"/>
</dbReference>
<dbReference type="PRO" id="PR:O75023"/>
<dbReference type="Proteomes" id="UP000005640">
    <property type="component" value="Chromosome 19"/>
</dbReference>
<dbReference type="RNAct" id="O75023">
    <property type="molecule type" value="protein"/>
</dbReference>
<dbReference type="Bgee" id="ENSG00000105609">
    <property type="expression patterns" value="Expressed in spleen and 99 other cell types or tissues"/>
</dbReference>
<dbReference type="GO" id="GO:0005886">
    <property type="term" value="C:plasma membrane"/>
    <property type="evidence" value="ECO:0000318"/>
    <property type="project" value="GO_Central"/>
</dbReference>
<dbReference type="GO" id="GO:0032396">
    <property type="term" value="F:inhibitory MHC class I receptor activity"/>
    <property type="evidence" value="ECO:0000318"/>
    <property type="project" value="GO_Central"/>
</dbReference>
<dbReference type="GO" id="GO:0004888">
    <property type="term" value="F:transmembrane signaling receptor activity"/>
    <property type="evidence" value="ECO:0000304"/>
    <property type="project" value="ProtInc"/>
</dbReference>
<dbReference type="GO" id="GO:0002250">
    <property type="term" value="P:adaptive immune response"/>
    <property type="evidence" value="ECO:0007669"/>
    <property type="project" value="UniProtKB-KW"/>
</dbReference>
<dbReference type="GO" id="GO:0007166">
    <property type="term" value="P:cell surface receptor signaling pathway"/>
    <property type="evidence" value="ECO:0000304"/>
    <property type="project" value="ProtInc"/>
</dbReference>
<dbReference type="GO" id="GO:0019221">
    <property type="term" value="P:cytokine-mediated signaling pathway"/>
    <property type="evidence" value="ECO:0000318"/>
    <property type="project" value="GO_Central"/>
</dbReference>
<dbReference type="GO" id="GO:0006952">
    <property type="term" value="P:defense response"/>
    <property type="evidence" value="ECO:0000304"/>
    <property type="project" value="ProtInc"/>
</dbReference>
<dbReference type="GO" id="GO:0002764">
    <property type="term" value="P:immune response-regulating signaling pathway"/>
    <property type="evidence" value="ECO:0000318"/>
    <property type="project" value="GO_Central"/>
</dbReference>
<dbReference type="CDD" id="cd05751">
    <property type="entry name" value="IgC2_D1_LILR_KIR_like"/>
    <property type="match status" value="1"/>
</dbReference>
<dbReference type="FunFam" id="2.60.40.10:FF:000049">
    <property type="entry name" value="Leukocyte immunoglobulin-like receptor subfamily B member 1"/>
    <property type="match status" value="4"/>
</dbReference>
<dbReference type="Gene3D" id="2.60.40.10">
    <property type="entry name" value="Immunoglobulins"/>
    <property type="match status" value="4"/>
</dbReference>
<dbReference type="InterPro" id="IPR007110">
    <property type="entry name" value="Ig-like_dom"/>
</dbReference>
<dbReference type="InterPro" id="IPR036179">
    <property type="entry name" value="Ig-like_dom_sf"/>
</dbReference>
<dbReference type="InterPro" id="IPR013783">
    <property type="entry name" value="Ig-like_fold"/>
</dbReference>
<dbReference type="InterPro" id="IPR050412">
    <property type="entry name" value="Ig-like_Receptors_ImmuneReg"/>
</dbReference>
<dbReference type="InterPro" id="IPR003599">
    <property type="entry name" value="Ig_sub"/>
</dbReference>
<dbReference type="InterPro" id="IPR003598">
    <property type="entry name" value="Ig_sub2"/>
</dbReference>
<dbReference type="InterPro" id="IPR013151">
    <property type="entry name" value="Immunoglobulin_dom"/>
</dbReference>
<dbReference type="PANTHER" id="PTHR11738:SF108">
    <property type="entry name" value="LEUKOCYTE IMMUNOGLOBULIN-LIKE RECEPTOR SUBFAMILY B MEMBER 5"/>
    <property type="match status" value="1"/>
</dbReference>
<dbReference type="PANTHER" id="PTHR11738">
    <property type="entry name" value="MHC CLASS I NK CELL RECEPTOR"/>
    <property type="match status" value="1"/>
</dbReference>
<dbReference type="Pfam" id="PF00047">
    <property type="entry name" value="ig"/>
    <property type="match status" value="2"/>
</dbReference>
<dbReference type="Pfam" id="PF13895">
    <property type="entry name" value="Ig_2"/>
    <property type="match status" value="1"/>
</dbReference>
<dbReference type="SMART" id="SM00409">
    <property type="entry name" value="IG"/>
    <property type="match status" value="4"/>
</dbReference>
<dbReference type="SMART" id="SM00408">
    <property type="entry name" value="IGc2"/>
    <property type="match status" value="3"/>
</dbReference>
<dbReference type="SUPFAM" id="SSF48726">
    <property type="entry name" value="Immunoglobulin"/>
    <property type="match status" value="4"/>
</dbReference>
<dbReference type="PROSITE" id="PS50835">
    <property type="entry name" value="IG_LIKE"/>
    <property type="match status" value="1"/>
</dbReference>
<sequence length="590" mass="64067">MTLTLSVLICLGLSVGPRTCVQAGTLPKPTLWAEPASVIARGKPVTLWCQGPLETEEYRLDKEGLPWARKRQNPLEPGAKAKFHIPSTVYDSAGRYRCYYETPAGWSEPSDPLELVATGFYAEPTLLALPSPVVASGGNVTLQCDTLDGLLTFVLVEEEQKLPRTLYSQKLPKGPSQALFPVGPVTPSCRWRFRCYYYYRKNPQVWSNPSDLLEILVPGVSRKPSLLIPQGSVVARGGSLTLQCRSDVGYDIFVLYKEGEHDLVQGSGQQPQAGLSQANFTLGPVSRSHGGQYRCYGAHNLSPRWSAPSDPLDILIAGLIPDIPALSVQPGPKVASGENVTLLCQSWHQIDTFFLTKEGAAHPPLCLKSKYQSYRHQAEFSMSPVTSAQGGTYRCYSAIRSYPYLLSSPSYPQELVVSGPSGDPSLSPTGSTPTPGPEDQPLTPTGLDPQSGLGRHLGVVTGVSVAFVLLLFLLLFLLLRHRHQSKHRTSAHFYRPAGAAGPEPKDQGLQKRASPVADIQEEILNAAVKDTQPKDGVEMDAPAAASEAPQDVTYAQLHSLTLRREATEPPPSQEREPPAEPSIYAPLAIH</sequence>
<gene>
    <name type="primary">LILRB5</name>
    <name type="synonym">LIR8</name>
</gene>
<accession>O75023</accession>
<accession>Q8N760</accession>